<evidence type="ECO:0000250" key="1"/>
<evidence type="ECO:0000305" key="2"/>
<dbReference type="EC" id="2.1.1.228"/>
<dbReference type="EMBL" id="AE008917">
    <property type="protein sequence ID" value="AAL51331.1"/>
    <property type="molecule type" value="Genomic_DNA"/>
</dbReference>
<dbReference type="PIR" id="AH3270">
    <property type="entry name" value="AH3270"/>
</dbReference>
<dbReference type="SMR" id="Q8YJD7"/>
<dbReference type="KEGG" id="bme:BMEI0149"/>
<dbReference type="eggNOG" id="COG0336">
    <property type="taxonomic scope" value="Bacteria"/>
</dbReference>
<dbReference type="Proteomes" id="UP000000419">
    <property type="component" value="Chromosome I"/>
</dbReference>
<dbReference type="GO" id="GO:0005829">
    <property type="term" value="C:cytosol"/>
    <property type="evidence" value="ECO:0007669"/>
    <property type="project" value="TreeGrafter"/>
</dbReference>
<dbReference type="GO" id="GO:0052906">
    <property type="term" value="F:tRNA (guanine(37)-N1)-methyltransferase activity"/>
    <property type="evidence" value="ECO:0007669"/>
    <property type="project" value="UniProtKB-UniRule"/>
</dbReference>
<dbReference type="GO" id="GO:0002939">
    <property type="term" value="P:tRNA N1-guanine methylation"/>
    <property type="evidence" value="ECO:0007669"/>
    <property type="project" value="TreeGrafter"/>
</dbReference>
<dbReference type="CDD" id="cd18080">
    <property type="entry name" value="TrmD-like"/>
    <property type="match status" value="1"/>
</dbReference>
<dbReference type="Gene3D" id="3.40.1280.10">
    <property type="match status" value="1"/>
</dbReference>
<dbReference type="Gene3D" id="1.10.1270.20">
    <property type="entry name" value="tRNA(m1g37)methyltransferase, domain 2"/>
    <property type="match status" value="1"/>
</dbReference>
<dbReference type="HAMAP" id="MF_00605">
    <property type="entry name" value="TrmD"/>
    <property type="match status" value="1"/>
</dbReference>
<dbReference type="InterPro" id="IPR029028">
    <property type="entry name" value="Alpha/beta_knot_MTases"/>
</dbReference>
<dbReference type="InterPro" id="IPR023148">
    <property type="entry name" value="tRNA_m1G_MeTrfase_C_sf"/>
</dbReference>
<dbReference type="InterPro" id="IPR002649">
    <property type="entry name" value="tRNA_m1G_MeTrfase_TrmD"/>
</dbReference>
<dbReference type="InterPro" id="IPR029026">
    <property type="entry name" value="tRNA_m1G_MTases_N"/>
</dbReference>
<dbReference type="InterPro" id="IPR016009">
    <property type="entry name" value="tRNA_MeTrfase_TRMD/TRM10"/>
</dbReference>
<dbReference type="NCBIfam" id="NF000648">
    <property type="entry name" value="PRK00026.1"/>
    <property type="match status" value="1"/>
</dbReference>
<dbReference type="NCBIfam" id="TIGR00088">
    <property type="entry name" value="trmD"/>
    <property type="match status" value="1"/>
</dbReference>
<dbReference type="PANTHER" id="PTHR46417">
    <property type="entry name" value="TRNA (GUANINE-N(1)-)-METHYLTRANSFERASE"/>
    <property type="match status" value="1"/>
</dbReference>
<dbReference type="PANTHER" id="PTHR46417:SF1">
    <property type="entry name" value="TRNA (GUANINE-N(1)-)-METHYLTRANSFERASE"/>
    <property type="match status" value="1"/>
</dbReference>
<dbReference type="Pfam" id="PF01746">
    <property type="entry name" value="tRNA_m1G_MT"/>
    <property type="match status" value="1"/>
</dbReference>
<dbReference type="PIRSF" id="PIRSF000386">
    <property type="entry name" value="tRNA_mtase"/>
    <property type="match status" value="1"/>
</dbReference>
<dbReference type="SUPFAM" id="SSF75217">
    <property type="entry name" value="alpha/beta knot"/>
    <property type="match status" value="1"/>
</dbReference>
<organism>
    <name type="scientific">Brucella melitensis biotype 1 (strain ATCC 23456 / CCUG 17765 / NCTC 10094 / 16M)</name>
    <dbReference type="NCBI Taxonomy" id="224914"/>
    <lineage>
        <taxon>Bacteria</taxon>
        <taxon>Pseudomonadati</taxon>
        <taxon>Pseudomonadota</taxon>
        <taxon>Alphaproteobacteria</taxon>
        <taxon>Hyphomicrobiales</taxon>
        <taxon>Brucellaceae</taxon>
        <taxon>Brucella/Ochrobactrum group</taxon>
        <taxon>Brucella</taxon>
    </lineage>
</organism>
<reference key="1">
    <citation type="journal article" date="2002" name="Proc. Natl. Acad. Sci. U.S.A.">
        <title>The genome sequence of the facultative intracellular pathogen Brucella melitensis.</title>
        <authorList>
            <person name="DelVecchio V.G."/>
            <person name="Kapatral V."/>
            <person name="Redkar R.J."/>
            <person name="Patra G."/>
            <person name="Mujer C."/>
            <person name="Los T."/>
            <person name="Ivanova N."/>
            <person name="Anderson I."/>
            <person name="Bhattacharyya A."/>
            <person name="Lykidis A."/>
            <person name="Reznik G."/>
            <person name="Jablonski L."/>
            <person name="Larsen N."/>
            <person name="D'Souza M."/>
            <person name="Bernal A."/>
            <person name="Mazur M."/>
            <person name="Goltsman E."/>
            <person name="Selkov E."/>
            <person name="Elzer P.H."/>
            <person name="Hagius S."/>
            <person name="O'Callaghan D."/>
            <person name="Letesson J.-J."/>
            <person name="Haselkorn R."/>
            <person name="Kyrpides N.C."/>
            <person name="Overbeek R."/>
        </authorList>
    </citation>
    <scope>NUCLEOTIDE SEQUENCE [LARGE SCALE GENOMIC DNA]</scope>
    <source>
        <strain>ATCC 23456 / CCUG 17765 / NCTC 10094 / 16M</strain>
    </source>
</reference>
<proteinExistence type="inferred from homology"/>
<name>TRMD_BRUME</name>
<comment type="function">
    <text evidence="1">Specifically methylates guanosine-37 in various tRNAs.</text>
</comment>
<comment type="catalytic activity">
    <reaction>
        <text>guanosine(37) in tRNA + S-adenosyl-L-methionine = N(1)-methylguanosine(37) in tRNA + S-adenosyl-L-homocysteine + H(+)</text>
        <dbReference type="Rhea" id="RHEA:36899"/>
        <dbReference type="Rhea" id="RHEA-COMP:10145"/>
        <dbReference type="Rhea" id="RHEA-COMP:10147"/>
        <dbReference type="ChEBI" id="CHEBI:15378"/>
        <dbReference type="ChEBI" id="CHEBI:57856"/>
        <dbReference type="ChEBI" id="CHEBI:59789"/>
        <dbReference type="ChEBI" id="CHEBI:73542"/>
        <dbReference type="ChEBI" id="CHEBI:74269"/>
        <dbReference type="EC" id="2.1.1.228"/>
    </reaction>
</comment>
<comment type="subunit">
    <text evidence="1">Homodimer.</text>
</comment>
<comment type="subcellular location">
    <subcellularLocation>
        <location evidence="2">Cytoplasm</location>
    </subcellularLocation>
</comment>
<comment type="similarity">
    <text evidence="2">Belongs to the RNA methyltransferase TrmD family.</text>
</comment>
<accession>Q8YJD7</accession>
<keyword id="KW-0963">Cytoplasm</keyword>
<keyword id="KW-0489">Methyltransferase</keyword>
<keyword id="KW-0949">S-adenosyl-L-methionine</keyword>
<keyword id="KW-0808">Transferase</keyword>
<keyword id="KW-0819">tRNA processing</keyword>
<feature type="chain" id="PRO_0000060343" description="tRNA (guanine-N(1)-)-methyltransferase">
    <location>
        <begin position="1"/>
        <end position="241"/>
    </location>
</feature>
<feature type="binding site" evidence="1">
    <location>
        <position position="117"/>
    </location>
    <ligand>
        <name>S-adenosyl-L-methionine</name>
        <dbReference type="ChEBI" id="CHEBI:59789"/>
    </ligand>
</feature>
<feature type="binding site" evidence="1">
    <location>
        <begin position="137"/>
        <end position="142"/>
    </location>
    <ligand>
        <name>S-adenosyl-L-methionine</name>
        <dbReference type="ChEBI" id="CHEBI:59789"/>
    </ligand>
</feature>
<protein>
    <recommendedName>
        <fullName>tRNA (guanine-N(1)-)-methyltransferase</fullName>
        <ecNumber>2.1.1.228</ecNumber>
    </recommendedName>
    <alternativeName>
        <fullName>M1G-methyltransferase</fullName>
    </alternativeName>
    <alternativeName>
        <fullName>tRNA [GM37] methyltransferase</fullName>
    </alternativeName>
</protein>
<gene>
    <name type="primary">trmD</name>
    <name type="ordered locus">BMEI0149</name>
</gene>
<sequence length="241" mass="26498">MPEKEGGRFHASVLTLYPEMFPGPLGISLAGKALAEGKWQLDTVQIRDFAEGRHRMVDDTPSGGGAGMVMKADVVARALDSVDDGRPMLLMTPRGKPLTQERVRALADGAGAIILCGRFEGVDERVIEGRNLEEISIGDYILSGGETAAIVLLDAVVRLLPGVMGNRESGETESFETGLLEHPHYTRPQEWEGRAIPDILTSGNHGAIDKWRLEQAERITRERRPDLWEAYCKNRRKIGGQ</sequence>